<name>VATB_STRSV</name>
<feature type="chain" id="PRO_1000059397" description="V-type ATP synthase beta chain">
    <location>
        <begin position="1"/>
        <end position="464"/>
    </location>
</feature>
<sequence length="464" mass="51788">MSVIKEYRTVSEVVGPLMIVDQVAGVHFNELVEIQLHDGSKRQGQVLEVQEDKAMVQLFEGSSGINLEKAKVRFTGRPLELPVSEDMVGRIFNGMGKPIDGGPAILPEKYLDIDGQAINPVARDYPDEFIQTGISAIDHLNTLVRGQKLPVFSGSGLPHKELAAQIARQATVLNSDENFAVVFVAMGITFEEAEFFMNDLRETGAIDRSVLFINLANDPAIERIATPRIALTAAEYLAYEKDMHVLVIMTDMTNYCEALREVSAARREVPGRRGYPGYLYTNLSTLYERAGRLVGKKGSVTQIPILSMPEDDITHPIPDLTGYITEGQIILSRELYNSGYRPPINVLPSLSRLKDKGSGEGKTRGDHAATMNQLFAAYAQGKQAKELAVVLGESALSETDKLYVRFTDRFEQEYINQGFQTNRTIEESLDLGWELLSILPRTELKRIKDDMIDQYLPQTKEEER</sequence>
<comment type="function">
    <text evidence="1">Produces ATP from ADP in the presence of a proton gradient across the membrane. The V-type beta chain is a regulatory subunit.</text>
</comment>
<comment type="similarity">
    <text evidence="1">Belongs to the ATPase alpha/beta chains family.</text>
</comment>
<dbReference type="EMBL" id="CP000387">
    <property type="protein sequence ID" value="ABN43554.1"/>
    <property type="molecule type" value="Genomic_DNA"/>
</dbReference>
<dbReference type="RefSeq" id="WP_011836323.1">
    <property type="nucleotide sequence ID" value="NC_009009.1"/>
</dbReference>
<dbReference type="RefSeq" id="YP_001034104.1">
    <property type="nucleotide sequence ID" value="NC_009009.1"/>
</dbReference>
<dbReference type="SMR" id="A3CK49"/>
<dbReference type="STRING" id="388919.SSA_0092"/>
<dbReference type="KEGG" id="ssa:SSA_0092"/>
<dbReference type="PATRIC" id="fig|388919.9.peg.86"/>
<dbReference type="eggNOG" id="COG1156">
    <property type="taxonomic scope" value="Bacteria"/>
</dbReference>
<dbReference type="HOGENOM" id="CLU_022916_0_0_9"/>
<dbReference type="OrthoDB" id="9802718at2"/>
<dbReference type="Proteomes" id="UP000002148">
    <property type="component" value="Chromosome"/>
</dbReference>
<dbReference type="GO" id="GO:0005524">
    <property type="term" value="F:ATP binding"/>
    <property type="evidence" value="ECO:0007669"/>
    <property type="project" value="UniProtKB-UniRule"/>
</dbReference>
<dbReference type="GO" id="GO:0046933">
    <property type="term" value="F:proton-transporting ATP synthase activity, rotational mechanism"/>
    <property type="evidence" value="ECO:0007669"/>
    <property type="project" value="UniProtKB-UniRule"/>
</dbReference>
<dbReference type="GO" id="GO:0042777">
    <property type="term" value="P:proton motive force-driven plasma membrane ATP synthesis"/>
    <property type="evidence" value="ECO:0007669"/>
    <property type="project" value="UniProtKB-UniRule"/>
</dbReference>
<dbReference type="CDD" id="cd18112">
    <property type="entry name" value="ATP-synt_V_A-type_beta_C"/>
    <property type="match status" value="1"/>
</dbReference>
<dbReference type="CDD" id="cd18118">
    <property type="entry name" value="ATP-synt_V_A-type_beta_N"/>
    <property type="match status" value="1"/>
</dbReference>
<dbReference type="CDD" id="cd01135">
    <property type="entry name" value="V_A-ATPase_B"/>
    <property type="match status" value="1"/>
</dbReference>
<dbReference type="Gene3D" id="3.40.50.12240">
    <property type="match status" value="1"/>
</dbReference>
<dbReference type="HAMAP" id="MF_00310">
    <property type="entry name" value="ATP_synth_B_arch"/>
    <property type="match status" value="1"/>
</dbReference>
<dbReference type="InterPro" id="IPR055190">
    <property type="entry name" value="ATP-synt_VA_C"/>
</dbReference>
<dbReference type="InterPro" id="IPR020003">
    <property type="entry name" value="ATPase_a/bsu_AS"/>
</dbReference>
<dbReference type="InterPro" id="IPR004100">
    <property type="entry name" value="ATPase_F1/V1/A1_a/bsu_N"/>
</dbReference>
<dbReference type="InterPro" id="IPR000194">
    <property type="entry name" value="ATPase_F1/V1/A1_a/bsu_nucl-bd"/>
</dbReference>
<dbReference type="InterPro" id="IPR027417">
    <property type="entry name" value="P-loop_NTPase"/>
</dbReference>
<dbReference type="InterPro" id="IPR022879">
    <property type="entry name" value="V-ATPase_su_B/beta"/>
</dbReference>
<dbReference type="NCBIfam" id="NF003235">
    <property type="entry name" value="PRK04196.1"/>
    <property type="match status" value="1"/>
</dbReference>
<dbReference type="PANTHER" id="PTHR43389">
    <property type="entry name" value="V-TYPE PROTON ATPASE SUBUNIT B"/>
    <property type="match status" value="1"/>
</dbReference>
<dbReference type="PANTHER" id="PTHR43389:SF4">
    <property type="entry name" value="V-TYPE PROTON ATPASE SUBUNIT B"/>
    <property type="match status" value="1"/>
</dbReference>
<dbReference type="Pfam" id="PF00006">
    <property type="entry name" value="ATP-synt_ab"/>
    <property type="match status" value="1"/>
</dbReference>
<dbReference type="Pfam" id="PF02874">
    <property type="entry name" value="ATP-synt_ab_N"/>
    <property type="match status" value="1"/>
</dbReference>
<dbReference type="Pfam" id="PF22919">
    <property type="entry name" value="ATP-synt_VA_C"/>
    <property type="match status" value="1"/>
</dbReference>
<dbReference type="PIRSF" id="PIRSF039114">
    <property type="entry name" value="V-ATPsynth_beta/V-ATPase_B"/>
    <property type="match status" value="1"/>
</dbReference>
<dbReference type="SUPFAM" id="SSF47917">
    <property type="entry name" value="C-terminal domain of alpha and beta subunits of F1 ATP synthase"/>
    <property type="match status" value="1"/>
</dbReference>
<dbReference type="SUPFAM" id="SSF52540">
    <property type="entry name" value="P-loop containing nucleoside triphosphate hydrolases"/>
    <property type="match status" value="1"/>
</dbReference>
<dbReference type="PROSITE" id="PS00152">
    <property type="entry name" value="ATPASE_ALPHA_BETA"/>
    <property type="match status" value="1"/>
</dbReference>
<proteinExistence type="inferred from homology"/>
<evidence type="ECO:0000255" key="1">
    <source>
        <dbReference type="HAMAP-Rule" id="MF_00310"/>
    </source>
</evidence>
<organism>
    <name type="scientific">Streptococcus sanguinis (strain SK36)</name>
    <dbReference type="NCBI Taxonomy" id="388919"/>
    <lineage>
        <taxon>Bacteria</taxon>
        <taxon>Bacillati</taxon>
        <taxon>Bacillota</taxon>
        <taxon>Bacilli</taxon>
        <taxon>Lactobacillales</taxon>
        <taxon>Streptococcaceae</taxon>
        <taxon>Streptococcus</taxon>
    </lineage>
</organism>
<protein>
    <recommendedName>
        <fullName evidence="1">V-type ATP synthase beta chain</fullName>
    </recommendedName>
    <alternativeName>
        <fullName evidence="1">V-ATPase subunit B</fullName>
    </alternativeName>
</protein>
<gene>
    <name evidence="1" type="primary">atpB</name>
    <name type="ordered locus">SSA_0092</name>
</gene>
<accession>A3CK49</accession>
<keyword id="KW-0066">ATP synthesis</keyword>
<keyword id="KW-0375">Hydrogen ion transport</keyword>
<keyword id="KW-0406">Ion transport</keyword>
<keyword id="KW-1185">Reference proteome</keyword>
<keyword id="KW-0813">Transport</keyword>
<reference key="1">
    <citation type="journal article" date="2007" name="J. Bacteriol.">
        <title>Genome of the opportunistic pathogen Streptococcus sanguinis.</title>
        <authorList>
            <person name="Xu P."/>
            <person name="Alves J.M."/>
            <person name="Kitten T."/>
            <person name="Brown A."/>
            <person name="Chen Z."/>
            <person name="Ozaki L.S."/>
            <person name="Manque P."/>
            <person name="Ge X."/>
            <person name="Serrano M.G."/>
            <person name="Puiu D."/>
            <person name="Hendricks S."/>
            <person name="Wang Y."/>
            <person name="Chaplin M.D."/>
            <person name="Akan D."/>
            <person name="Paik S."/>
            <person name="Peterson D.L."/>
            <person name="Macrina F.L."/>
            <person name="Buck G.A."/>
        </authorList>
    </citation>
    <scope>NUCLEOTIDE SEQUENCE [LARGE SCALE GENOMIC DNA]</scope>
    <source>
        <strain>SK36</strain>
    </source>
</reference>